<sequence>MKVTDVRLRKIQTDGRMKALVSITLDEAFVIHDLRVIEGNSGLFVAMPSKRTPDGEFRDIAHPINSDMRQEIQDAVMKVYDETDEVVPDKNATSEDSEEA</sequence>
<organism>
    <name type="scientific">Staphylococcus aureus (strain N315)</name>
    <dbReference type="NCBI Taxonomy" id="158879"/>
    <lineage>
        <taxon>Bacteria</taxon>
        <taxon>Bacillati</taxon>
        <taxon>Bacillota</taxon>
        <taxon>Bacilli</taxon>
        <taxon>Bacillales</taxon>
        <taxon>Staphylococcaceae</taxon>
        <taxon>Staphylococcus</taxon>
    </lineage>
</organism>
<accession>Q7A7B5</accession>
<comment type="function">
    <text evidence="1">Could be involved in septation.</text>
</comment>
<comment type="miscellaneous">
    <text>Expressed more highly under biofilm conditions after 24 hours of growth.</text>
</comment>
<comment type="similarity">
    <text evidence="1">Belongs to the SpoVG family.</text>
</comment>
<comment type="sequence caution" evidence="2">
    <conflict type="erroneous initiation">
        <sequence resource="EMBL-CDS" id="BAB41686"/>
    </conflict>
</comment>
<keyword id="KW-0131">Cell cycle</keyword>
<keyword id="KW-0132">Cell division</keyword>
<keyword id="KW-0717">Septation</keyword>
<evidence type="ECO:0000255" key="1">
    <source>
        <dbReference type="HAMAP-Rule" id="MF_00819"/>
    </source>
</evidence>
<evidence type="ECO:0000305" key="2"/>
<reference key="1">
    <citation type="journal article" date="2001" name="Lancet">
        <title>Whole genome sequencing of meticillin-resistant Staphylococcus aureus.</title>
        <authorList>
            <person name="Kuroda M."/>
            <person name="Ohta T."/>
            <person name="Uchiyama I."/>
            <person name="Baba T."/>
            <person name="Yuzawa H."/>
            <person name="Kobayashi I."/>
            <person name="Cui L."/>
            <person name="Oguchi A."/>
            <person name="Aoki K."/>
            <person name="Nagai Y."/>
            <person name="Lian J.-Q."/>
            <person name="Ito T."/>
            <person name="Kanamori M."/>
            <person name="Matsumaru H."/>
            <person name="Maruyama A."/>
            <person name="Murakami H."/>
            <person name="Hosoyama A."/>
            <person name="Mizutani-Ui Y."/>
            <person name="Takahashi N.K."/>
            <person name="Sawano T."/>
            <person name="Inoue R."/>
            <person name="Kaito C."/>
            <person name="Sekimizu K."/>
            <person name="Hirakawa H."/>
            <person name="Kuhara S."/>
            <person name="Goto S."/>
            <person name="Yabuzaki J."/>
            <person name="Kanehisa M."/>
            <person name="Yamashita A."/>
            <person name="Oshima K."/>
            <person name="Furuya K."/>
            <person name="Yoshino C."/>
            <person name="Shiba T."/>
            <person name="Hattori M."/>
            <person name="Ogasawara N."/>
            <person name="Hayashi H."/>
            <person name="Hiramatsu K."/>
        </authorList>
    </citation>
    <scope>NUCLEOTIDE SEQUENCE [LARGE SCALE GENOMIC DNA]</scope>
    <source>
        <strain>N315</strain>
    </source>
</reference>
<reference key="2">
    <citation type="journal article" date="2005" name="Appl. Environ. Microbiol.">
        <title>Differential gene expression profiling of Staphylococcus aureus cultivated under biofilm and planktonic conditions.</title>
        <authorList>
            <person name="Resch A."/>
            <person name="Rosenstein R."/>
            <person name="Nerz C."/>
            <person name="Goetz F."/>
        </authorList>
    </citation>
    <scope>GENE EXPRESSION PROFILING</scope>
</reference>
<reference key="3">
    <citation type="journal article" date="2005" name="J. Microbiol. Methods">
        <title>Correlation of proteomic and transcriptomic profiles of Staphylococcus aureus during the post-exponential phase of growth.</title>
        <authorList>
            <person name="Scherl A."/>
            <person name="Francois P."/>
            <person name="Bento M."/>
            <person name="Deshusses J.M."/>
            <person name="Charbonnier Y."/>
            <person name="Converset V."/>
            <person name="Huyghe A."/>
            <person name="Walter N."/>
            <person name="Hoogland C."/>
            <person name="Appel R.D."/>
            <person name="Sanchez J.-C."/>
            <person name="Zimmermann-Ivol C.G."/>
            <person name="Corthals G.L."/>
            <person name="Hochstrasser D.F."/>
            <person name="Schrenzel J."/>
        </authorList>
    </citation>
    <scope>IDENTIFICATION BY MASS SPECTROMETRY</scope>
    <source>
        <strain>N315</strain>
    </source>
</reference>
<reference key="4">
    <citation type="submission" date="2007-10" db="UniProtKB">
        <title>Shotgun proteomic analysis of total and membrane protein extracts of S. aureus strain N315.</title>
        <authorList>
            <person name="Vaezzadeh A.R."/>
            <person name="Deshusses J."/>
            <person name="Lescuyer P."/>
            <person name="Hochstrasser D.F."/>
        </authorList>
    </citation>
    <scope>IDENTIFICATION BY MASS SPECTROMETRY [LARGE SCALE ANALYSIS]</scope>
    <source>
        <strain>N315</strain>
    </source>
</reference>
<proteinExistence type="evidence at protein level"/>
<dbReference type="EMBL" id="BA000018">
    <property type="protein sequence ID" value="BAB41686.1"/>
    <property type="status" value="ALT_INIT"/>
    <property type="molecule type" value="Genomic_DNA"/>
</dbReference>
<dbReference type="PIR" id="C89816">
    <property type="entry name" value="C89816"/>
</dbReference>
<dbReference type="RefSeq" id="WP_000868999.1">
    <property type="nucleotide sequence ID" value="NC_002745.2"/>
</dbReference>
<dbReference type="SMR" id="Q7A7B5"/>
<dbReference type="EnsemblBacteria" id="BAB41686">
    <property type="protein sequence ID" value="BAB41686"/>
    <property type="gene ID" value="BAB41686"/>
</dbReference>
<dbReference type="KEGG" id="sau:SA0456"/>
<dbReference type="HOGENOM" id="CLU_103669_2_1_9"/>
<dbReference type="GO" id="GO:0000917">
    <property type="term" value="P:division septum assembly"/>
    <property type="evidence" value="ECO:0007669"/>
    <property type="project" value="UniProtKB-KW"/>
</dbReference>
<dbReference type="GO" id="GO:0030435">
    <property type="term" value="P:sporulation resulting in formation of a cellular spore"/>
    <property type="evidence" value="ECO:0007669"/>
    <property type="project" value="InterPro"/>
</dbReference>
<dbReference type="Gene3D" id="3.30.1120.40">
    <property type="entry name" value="Stage V sporulation protein G"/>
    <property type="match status" value="1"/>
</dbReference>
<dbReference type="HAMAP" id="MF_00819">
    <property type="entry name" value="SpoVG"/>
    <property type="match status" value="1"/>
</dbReference>
<dbReference type="InterPro" id="IPR007170">
    <property type="entry name" value="SpoVG"/>
</dbReference>
<dbReference type="InterPro" id="IPR036751">
    <property type="entry name" value="SpoVG_sf"/>
</dbReference>
<dbReference type="NCBIfam" id="NF009749">
    <property type="entry name" value="PRK13259.1"/>
    <property type="match status" value="1"/>
</dbReference>
<dbReference type="PANTHER" id="PTHR38429">
    <property type="entry name" value="SEPTATION PROTEIN SPOVG-RELATED"/>
    <property type="match status" value="1"/>
</dbReference>
<dbReference type="PANTHER" id="PTHR38429:SF1">
    <property type="entry name" value="SEPTATION PROTEIN SPOVG-RELATED"/>
    <property type="match status" value="1"/>
</dbReference>
<dbReference type="Pfam" id="PF04026">
    <property type="entry name" value="SpoVG"/>
    <property type="match status" value="1"/>
</dbReference>
<dbReference type="SUPFAM" id="SSF160537">
    <property type="entry name" value="SpoVG-like"/>
    <property type="match status" value="1"/>
</dbReference>
<gene>
    <name evidence="1" type="primary">spoVG</name>
    <name type="ordered locus">SA0456</name>
</gene>
<feature type="chain" id="PRO_0000157210" description="Putative septation protein SpoVG">
    <location>
        <begin position="1"/>
        <end position="100"/>
    </location>
</feature>
<protein>
    <recommendedName>
        <fullName evidence="1">Putative septation protein SpoVG</fullName>
    </recommendedName>
</protein>
<name>SP5G_STAAN</name>